<keyword id="KW-0029">Amino-acid transport</keyword>
<keyword id="KW-0472">Membrane</keyword>
<keyword id="KW-1185">Reference proteome</keyword>
<keyword id="KW-0812">Transmembrane</keyword>
<keyword id="KW-1133">Transmembrane helix</keyword>
<keyword id="KW-0813">Transport</keyword>
<feature type="chain" id="PRO_0000440112" description="Amino acid transporter AVT6A">
    <location>
        <begin position="1"/>
        <end position="460"/>
    </location>
</feature>
<feature type="transmembrane region" description="Helical; Name=1" evidence="1">
    <location>
        <begin position="45"/>
        <end position="65"/>
    </location>
</feature>
<feature type="transmembrane region" description="Helical; Name=2" evidence="1">
    <location>
        <begin position="66"/>
        <end position="86"/>
    </location>
</feature>
<feature type="transmembrane region" description="Helical; Name=3" evidence="1">
    <location>
        <begin position="120"/>
        <end position="140"/>
    </location>
</feature>
<feature type="transmembrane region" description="Helical; Name=4" evidence="1">
    <location>
        <begin position="172"/>
        <end position="192"/>
    </location>
</feature>
<feature type="transmembrane region" description="Helical; Name=5" evidence="1">
    <location>
        <begin position="199"/>
        <end position="219"/>
    </location>
</feature>
<feature type="transmembrane region" description="Helical; Name=6" evidence="1">
    <location>
        <begin position="238"/>
        <end position="258"/>
    </location>
</feature>
<feature type="transmembrane region" description="Helical; Name=7" evidence="1">
    <location>
        <begin position="281"/>
        <end position="301"/>
    </location>
</feature>
<feature type="transmembrane region" description="Helical; Name=8" evidence="1">
    <location>
        <begin position="336"/>
        <end position="356"/>
    </location>
</feature>
<feature type="transmembrane region" description="Helical; Name=9" evidence="1">
    <location>
        <begin position="371"/>
        <end position="391"/>
    </location>
</feature>
<feature type="transmembrane region" description="Helical; Name=10" evidence="1">
    <location>
        <begin position="394"/>
        <end position="414"/>
    </location>
</feature>
<feature type="transmembrane region" description="Helical; Name=11" evidence="1">
    <location>
        <begin position="427"/>
        <end position="447"/>
    </location>
</feature>
<feature type="sequence conflict" description="In Ref. 4; BAH20104." evidence="3" ref="4">
    <original>Y</original>
    <variation>C</variation>
    <location>
        <position position="345"/>
    </location>
</feature>
<evidence type="ECO:0000255" key="1"/>
<evidence type="ECO:0000303" key="2">
    <source>
    </source>
</evidence>
<evidence type="ECO:0000305" key="3"/>
<evidence type="ECO:0000312" key="4">
    <source>
        <dbReference type="Araport" id="AT3G30390"/>
    </source>
</evidence>
<evidence type="ECO:0000312" key="5">
    <source>
        <dbReference type="EMBL" id="BAB02239.1"/>
    </source>
</evidence>
<evidence type="ECO:0000312" key="6">
    <source>
        <dbReference type="EMBL" id="BAH20104.1"/>
    </source>
</evidence>
<reference key="1">
    <citation type="journal article" date="2000" name="DNA Res.">
        <title>Structural analysis of Arabidopsis thaliana chromosome 3. II. Sequence features of the 4,251,695 bp regions covered by 90 P1, TAC and BAC clones.</title>
        <authorList>
            <person name="Kaneko T."/>
            <person name="Katoh T."/>
            <person name="Sato S."/>
            <person name="Nakamura Y."/>
            <person name="Asamizu E."/>
            <person name="Tabata S."/>
        </authorList>
    </citation>
    <scope>NUCLEOTIDE SEQUENCE [LARGE SCALE GENOMIC DNA]</scope>
    <source>
        <strain>cv. Columbia</strain>
    </source>
</reference>
<reference key="2">
    <citation type="journal article" date="2017" name="Plant J.">
        <title>Araport11: a complete reannotation of the Arabidopsis thaliana reference genome.</title>
        <authorList>
            <person name="Cheng C.Y."/>
            <person name="Krishnakumar V."/>
            <person name="Chan A.P."/>
            <person name="Thibaud-Nissen F."/>
            <person name="Schobel S."/>
            <person name="Town C.D."/>
        </authorList>
    </citation>
    <scope>GENOME REANNOTATION</scope>
    <source>
        <strain>cv. Columbia</strain>
    </source>
</reference>
<reference key="3">
    <citation type="journal article" date="2003" name="Science">
        <title>Empirical analysis of transcriptional activity in the Arabidopsis genome.</title>
        <authorList>
            <person name="Yamada K."/>
            <person name="Lim J."/>
            <person name="Dale J.M."/>
            <person name="Chen H."/>
            <person name="Shinn P."/>
            <person name="Palm C.J."/>
            <person name="Southwick A.M."/>
            <person name="Wu H.C."/>
            <person name="Kim C.J."/>
            <person name="Nguyen M."/>
            <person name="Pham P.K."/>
            <person name="Cheuk R.F."/>
            <person name="Karlin-Newmann G."/>
            <person name="Liu S.X."/>
            <person name="Lam B."/>
            <person name="Sakano H."/>
            <person name="Wu T."/>
            <person name="Yu G."/>
            <person name="Miranda M."/>
            <person name="Quach H.L."/>
            <person name="Tripp M."/>
            <person name="Chang C.H."/>
            <person name="Lee J.M."/>
            <person name="Toriumi M.J."/>
            <person name="Chan M.M."/>
            <person name="Tang C.C."/>
            <person name="Onodera C.S."/>
            <person name="Deng J.M."/>
            <person name="Akiyama K."/>
            <person name="Ansari Y."/>
            <person name="Arakawa T."/>
            <person name="Banh J."/>
            <person name="Banno F."/>
            <person name="Bowser L."/>
            <person name="Brooks S.Y."/>
            <person name="Carninci P."/>
            <person name="Chao Q."/>
            <person name="Choy N."/>
            <person name="Enju A."/>
            <person name="Goldsmith A.D."/>
            <person name="Gurjal M."/>
            <person name="Hansen N.F."/>
            <person name="Hayashizaki Y."/>
            <person name="Johnson-Hopson C."/>
            <person name="Hsuan V.W."/>
            <person name="Iida K."/>
            <person name="Karnes M."/>
            <person name="Khan S."/>
            <person name="Koesema E."/>
            <person name="Ishida J."/>
            <person name="Jiang P.X."/>
            <person name="Jones T."/>
            <person name="Kawai J."/>
            <person name="Kamiya A."/>
            <person name="Meyers C."/>
            <person name="Nakajima M."/>
            <person name="Narusaka M."/>
            <person name="Seki M."/>
            <person name="Sakurai T."/>
            <person name="Satou M."/>
            <person name="Tamse R."/>
            <person name="Vaysberg M."/>
            <person name="Wallender E.K."/>
            <person name="Wong C."/>
            <person name="Yamamura Y."/>
            <person name="Yuan S."/>
            <person name="Shinozaki K."/>
            <person name="Davis R.W."/>
            <person name="Theologis A."/>
            <person name="Ecker J.R."/>
        </authorList>
    </citation>
    <scope>NUCLEOTIDE SEQUENCE [LARGE SCALE MRNA]</scope>
    <source>
        <strain>cv. Columbia</strain>
    </source>
</reference>
<reference key="4">
    <citation type="journal article" date="2009" name="DNA Res.">
        <title>Analysis of multiple occurrences of alternative splicing events in Arabidopsis thaliana using novel sequenced full-length cDNAs.</title>
        <authorList>
            <person name="Iida K."/>
            <person name="Fukami-Kobayashi K."/>
            <person name="Toyoda A."/>
            <person name="Sakaki Y."/>
            <person name="Kobayashi M."/>
            <person name="Seki M."/>
            <person name="Shinozaki K."/>
        </authorList>
    </citation>
    <scope>NUCLEOTIDE SEQUENCE [LARGE SCALE MRNA]</scope>
    <source>
        <strain>cv. Columbia</strain>
        <tissue evidence="6">Rosette leaf</tissue>
    </source>
</reference>
<reference key="5">
    <citation type="journal article" date="2017" name="FEBS Lett.">
        <title>Functional identification of AtAVT3, a family of vacuolar amino acid transporters, in Arabidopsis.</title>
        <authorList>
            <person name="Fujiki Y."/>
            <person name="Teshima H."/>
            <person name="Kashiwao S."/>
            <person name="Kawano-Kawada M."/>
            <person name="Ohsumi Y."/>
            <person name="Kakinuma Y."/>
            <person name="Sekito T."/>
        </authorList>
    </citation>
    <scope>GENE FAMILY</scope>
    <scope>NOMENCLATURE</scope>
</reference>
<organism>
    <name type="scientific">Arabidopsis thaliana</name>
    <name type="common">Mouse-ear cress</name>
    <dbReference type="NCBI Taxonomy" id="3702"/>
    <lineage>
        <taxon>Eukaryota</taxon>
        <taxon>Viridiplantae</taxon>
        <taxon>Streptophyta</taxon>
        <taxon>Embryophyta</taxon>
        <taxon>Tracheophyta</taxon>
        <taxon>Spermatophyta</taxon>
        <taxon>Magnoliopsida</taxon>
        <taxon>eudicotyledons</taxon>
        <taxon>Gunneridae</taxon>
        <taxon>Pentapetalae</taxon>
        <taxon>rosids</taxon>
        <taxon>malvids</taxon>
        <taxon>Brassicales</taxon>
        <taxon>Brassicaceae</taxon>
        <taxon>Camelineae</taxon>
        <taxon>Arabidopsis</taxon>
    </lineage>
</organism>
<name>AVT6A_ARATH</name>
<accession>Q9LI61</accession>
<accession>B9DH87</accession>
<dbReference type="EMBL" id="AP001314">
    <property type="protein sequence ID" value="BAB02239.1"/>
    <property type="molecule type" value="Genomic_DNA"/>
</dbReference>
<dbReference type="EMBL" id="CP002686">
    <property type="protein sequence ID" value="AEE77639.1"/>
    <property type="molecule type" value="Genomic_DNA"/>
</dbReference>
<dbReference type="EMBL" id="CP002686">
    <property type="protein sequence ID" value="AEE77640.1"/>
    <property type="molecule type" value="Genomic_DNA"/>
</dbReference>
<dbReference type="EMBL" id="CP002686">
    <property type="protein sequence ID" value="ANM65075.1"/>
    <property type="molecule type" value="Genomic_DNA"/>
</dbReference>
<dbReference type="EMBL" id="AY052201">
    <property type="protein sequence ID" value="AAK97672.1"/>
    <property type="molecule type" value="mRNA"/>
</dbReference>
<dbReference type="EMBL" id="AF428287">
    <property type="protein sequence ID" value="AAL16119.1"/>
    <property type="molecule type" value="mRNA"/>
</dbReference>
<dbReference type="EMBL" id="AK317437">
    <property type="protein sequence ID" value="BAH20104.1"/>
    <property type="molecule type" value="mRNA"/>
</dbReference>
<dbReference type="RefSeq" id="NP_001030795.1">
    <property type="nucleotide sequence ID" value="NM_001035718.1"/>
</dbReference>
<dbReference type="RefSeq" id="NP_001319669.1">
    <property type="nucleotide sequence ID" value="NM_001339051.1"/>
</dbReference>
<dbReference type="RefSeq" id="NP_566854.1">
    <property type="nucleotide sequence ID" value="NM_113938.3"/>
</dbReference>
<dbReference type="SMR" id="Q9LI61"/>
<dbReference type="FunCoup" id="Q9LI61">
    <property type="interactions" value="1434"/>
</dbReference>
<dbReference type="IntAct" id="Q9LI61">
    <property type="interactions" value="7"/>
</dbReference>
<dbReference type="STRING" id="3702.Q9LI61"/>
<dbReference type="PaxDb" id="3702-AT3G30390.2"/>
<dbReference type="ProteomicsDB" id="241158"/>
<dbReference type="EnsemblPlants" id="AT3G30390.1">
    <property type="protein sequence ID" value="AT3G30390.1"/>
    <property type="gene ID" value="AT3G30390"/>
</dbReference>
<dbReference type="EnsemblPlants" id="AT3G30390.2">
    <property type="protein sequence ID" value="AT3G30390.2"/>
    <property type="gene ID" value="AT3G30390"/>
</dbReference>
<dbReference type="EnsemblPlants" id="AT3G30390.3">
    <property type="protein sequence ID" value="AT3G30390.3"/>
    <property type="gene ID" value="AT3G30390"/>
</dbReference>
<dbReference type="GeneID" id="822740"/>
<dbReference type="Gramene" id="AT3G30390.1">
    <property type="protein sequence ID" value="AT3G30390.1"/>
    <property type="gene ID" value="AT3G30390"/>
</dbReference>
<dbReference type="Gramene" id="AT3G30390.2">
    <property type="protein sequence ID" value="AT3G30390.2"/>
    <property type="gene ID" value="AT3G30390"/>
</dbReference>
<dbReference type="Gramene" id="AT3G30390.3">
    <property type="protein sequence ID" value="AT3G30390.3"/>
    <property type="gene ID" value="AT3G30390"/>
</dbReference>
<dbReference type="KEGG" id="ath:AT3G30390"/>
<dbReference type="Araport" id="AT3G30390"/>
<dbReference type="TAIR" id="AT3G30390"/>
<dbReference type="eggNOG" id="KOG1305">
    <property type="taxonomic scope" value="Eukaryota"/>
</dbReference>
<dbReference type="HOGENOM" id="CLU_034419_2_0_1"/>
<dbReference type="InParanoid" id="Q9LI61"/>
<dbReference type="OMA" id="KARMQNV"/>
<dbReference type="PhylomeDB" id="Q9LI61"/>
<dbReference type="PRO" id="PR:Q9LI61"/>
<dbReference type="Proteomes" id="UP000006548">
    <property type="component" value="Chromosome 3"/>
</dbReference>
<dbReference type="ExpressionAtlas" id="Q9LI61">
    <property type="expression patterns" value="baseline and differential"/>
</dbReference>
<dbReference type="GO" id="GO:0031090">
    <property type="term" value="C:organelle membrane"/>
    <property type="evidence" value="ECO:0007669"/>
    <property type="project" value="UniProtKB-ARBA"/>
</dbReference>
<dbReference type="GO" id="GO:0000325">
    <property type="term" value="C:plant-type vacuole"/>
    <property type="evidence" value="ECO:0007005"/>
    <property type="project" value="TAIR"/>
</dbReference>
<dbReference type="GO" id="GO:0006865">
    <property type="term" value="P:amino acid transport"/>
    <property type="evidence" value="ECO:0007669"/>
    <property type="project" value="UniProtKB-KW"/>
</dbReference>
<dbReference type="InterPro" id="IPR013057">
    <property type="entry name" value="AA_transpt_TM"/>
</dbReference>
<dbReference type="PANTHER" id="PTHR22950">
    <property type="entry name" value="AMINO ACID TRANSPORTER"/>
    <property type="match status" value="1"/>
</dbReference>
<dbReference type="PANTHER" id="PTHR22950:SF643">
    <property type="entry name" value="AMINO ACID TRANSPORTER AVT6A"/>
    <property type="match status" value="1"/>
</dbReference>
<dbReference type="Pfam" id="PF01490">
    <property type="entry name" value="Aa_trans"/>
    <property type="match status" value="1"/>
</dbReference>
<comment type="subcellular location">
    <subcellularLocation>
        <location evidence="1">Membrane</location>
        <topology evidence="1">Multi-pass membrane protein</topology>
    </subcellularLocation>
</comment>
<comment type="similarity">
    <text evidence="3">Belongs to the amino acid/polyamine transporter 2 family. Amino acid/auxin permease (AAAP) (TC 2.A.18.6) subfamily.</text>
</comment>
<protein>
    <recommendedName>
        <fullName evidence="3">Amino acid transporter AVT6A</fullName>
        <shortName evidence="2">AtAvt6A</shortName>
    </recommendedName>
</protein>
<gene>
    <name evidence="2" type="primary">AVT6A</name>
    <name evidence="4" type="ordered locus">At3g30390</name>
    <name evidence="5" type="ORF">T6J22.16</name>
</gene>
<proteinExistence type="evidence at transcript level"/>
<sequence>MTVVGDVAPIPRRNSSTCSNDIAAPLLPECHGDEVAHDEFNGASFSGAVFNLATTIIGAGIMALPATMKILGLGLGITMIVVMAFLTDASIEFLLRFSKAGKNRSYGGLMGGSFGNPGRILLQVAVLVNNIGVLIVYMIIIGDVLAGKTEDGIHHFGVLEGWFGHHWWNGRAAILLITTLGVFAPLACFKRIDSLKFTSALSVALAVVFLIITAGISIMKLISGGVAMPRLLPDVTDLTSFWNLFTVVPVLVTAFICHYNVHSIQNELEDPSQIRPVVRSALMLCSSVYIMTSIFGFLLFGDDTLDDVLANFDTDLGIPFGSILNDAVRVSYALHLMLVFPIVFYPLRINIDGLLFPSARSLSTSNVRFGCLTAGLISVIFLGANFIPSIWDAFQFTGATAAVCLGFIFPASIILKDRHDKATNRDTTLAIFMIVLAVLSNAIAIYSDAYALFKKNAPRE</sequence>